<keyword id="KW-0002">3D-structure</keyword>
<keyword id="KW-0025">Alternative splicing</keyword>
<keyword id="KW-0037">Angiogenesis</keyword>
<keyword id="KW-1003">Cell membrane</keyword>
<keyword id="KW-0966">Cell projection</keyword>
<keyword id="KW-0217">Developmental protein</keyword>
<keyword id="KW-0225">Disease variant</keyword>
<keyword id="KW-1015">Disulfide bond</keyword>
<keyword id="KW-0325">Glycoprotein</keyword>
<keyword id="KW-0472">Membrane</keyword>
<keyword id="KW-1267">Proteomics identification</keyword>
<keyword id="KW-0675">Receptor</keyword>
<keyword id="KW-1185">Reference proteome</keyword>
<keyword id="KW-0677">Repeat</keyword>
<keyword id="KW-0732">Signal</keyword>
<keyword id="KW-0812">Transmembrane</keyword>
<keyword id="KW-1133">Transmembrane helix</keyword>
<evidence type="ECO:0000250" key="1"/>
<evidence type="ECO:0000250" key="2">
    <source>
        <dbReference type="UniProtKB" id="Q3UH93"/>
    </source>
</evidence>
<evidence type="ECO:0000255" key="3"/>
<evidence type="ECO:0000255" key="4">
    <source>
        <dbReference type="PROSITE-ProRule" id="PRU00352"/>
    </source>
</evidence>
<evidence type="ECO:0000256" key="5">
    <source>
        <dbReference type="SAM" id="MobiDB-lite"/>
    </source>
</evidence>
<evidence type="ECO:0000269" key="6">
    <source>
    </source>
</evidence>
<evidence type="ECO:0000269" key="7">
    <source>
    </source>
</evidence>
<evidence type="ECO:0000269" key="8">
    <source>
    </source>
</evidence>
<evidence type="ECO:0000269" key="9">
    <source>
    </source>
</evidence>
<evidence type="ECO:0000269" key="10">
    <source>
    </source>
</evidence>
<evidence type="ECO:0000269" key="11">
    <source>
    </source>
</evidence>
<evidence type="ECO:0000269" key="12">
    <source>
    </source>
</evidence>
<evidence type="ECO:0000269" key="13">
    <source>
    </source>
</evidence>
<evidence type="ECO:0000269" key="14">
    <source>
    </source>
</evidence>
<evidence type="ECO:0000303" key="15">
    <source>
    </source>
</evidence>
<evidence type="ECO:0000305" key="16"/>
<evidence type="ECO:0007829" key="17">
    <source>
        <dbReference type="PDB" id="3H6N"/>
    </source>
</evidence>
<protein>
    <recommendedName>
        <fullName>Plexin-D1</fullName>
    </recommendedName>
</protein>
<gene>
    <name type="primary">PLXND1</name>
    <name type="synonym">KIAA0620</name>
</gene>
<sequence length="1925" mass="212007">MAPRAAGGAPLSARAAAASPPPFQTPPRCPVPLLLLLLLGAARAGALEIQRRFPSPTPTNNFALDGAAGTVYLAAVNRLYQLSGANLSLEAEAAVGPVPDSPLCHAPQLPQASCEHPRRLTDNYNKILQLDPGQGLVVVCGSIYQGFCQLRRRGNISAVAVRFPPAAPPAEPVTVFPSMLNVAANHPNASTVGLVLPPAAGAGGSRLLVGATYTGYGSSFFPRNRSLEDHRFENTPEIAIRSLDTRGDLAKLFTFDLNPSDDNILKIKQGAKEQHKLGFVSAFLHPSDPPPGAQSYAYLALNSEARAGDKESQARSLLARICLPHGAGGDAKKLTESYIQLGLQCAGGAGRGDLYSRLVSVFPARERLFAVFERPQGSPAARAAPAALCAFRFADVRAAIRAARTACFVEPAPDVVAVLDSVVQGTGPACERKLNIQLQPEQLDCGAAHLQHPLSILQPLKATPVFRAPGLTSVAVASVNNYTAVFLGTVNGRLLKINLNESMQVVSRRVVTVAYGEPVHHVMQFDPADSGYLYLMTSHQMARVKVAACNVHSTCGDCVGAADAYCGWCALETRCTLQQDCTNSSQQHFWTSASEGPSRCPAMTVLPSEIDVRQEYPGMILQISGSLPSLSGMEMACDYGNNIRTVARVPGPAFGHQIAYCNLLPRDQFPPFPPNQDHVTVEMSVRVNGRNIVKANFTIYDCSRTAQVYPHTACTSCLSAQWPCFWCSQQHSCVSNQSRCEASPNPTSPQDCPRTLLSPLAPVPTGGSQNILVPLANTAFFQGAALECSFGLEEIFEAVWVNESVVRCDQVVLHTTRKSQVFPLSLQLKGRPARFLDSPEPMTVMVYNCAMGSPDCSQCLGREDLGHLCMWSDGCRLRGPLQPMAGTCPAPEIHAIEPLSGPLDGGTLLTIRGRNLGRRLSDVAHGVWIGGVACEPLPDRYTVSEEIVCVTGPAPGPLSGVVTVNASKEGKSRDRFSYVLPLVHSLEPTMGPKAGGTRITIHGNDLHVGSELQVLVNDTDPCTELMRTDTSIACTMPEGALPAPVPVCVRFERRGCVHGNLTFWYMQNPVITAISPRRSPVSGGRTITVAGERFHMVQNVSMAVHHIGREPTLCKVLNSTLITCPSPGALSNASAPVDFFINGRAYADEVAVAEELLDPEEAQRGSRFRLDYLPNPQFSTAKREKWIKHHPGEPLTLVIHKEQDSLGLQSHEYRVKIGQVSCDIQIVSDRIIHCSVNESLGAAVGQLPITIQVGNFNQTIATLQLGGSETAIIVSIVICSVLLLLSVVALFVFCTKSRRAERYWQKTLLQMEEMESQIREEIRKGFAELQTDMTDLTKELNRSQGIPFLEYKHFVTRTFFPKCSSLYEERYVLPSQTLNSQGSSQAQETHPLLGEWKIPESCRPNMEEGISLFSSLLNNKHFLIVFVHALEQQKDFAVRDRCSLASLLTIALHGKLEYYTSIMKELLVDLIDASAAKNPKLMLRRTESVVEKMLTNWMSICMYSCLRETVGEPFFLLLCAIKQQINKGSIDAITGKARYTLSEEWLLRENIEAKPRNLNVSFQGCGMDSLSVRAMDTDTLTQVKEKILEAFCKNVPYSQWPRAEDVDLEWFASSTQSYILRDLDDTSVVEDGRKKLNTLAHYKIPEGASLAMSLIDKKDNTLGRVKDLDTEKYFHLVLPTDELAEPKKSHRQSHRKKVLPEIYLTRLLSTKGTLQKFLDDLFKAILSIREDKPPLAVKYFFDFLEEQAEKRGISDPDTLHIWKTNSLPLRFWVNILKNPQFVFDIDKTDHIDACLSVIAQAFIDACSISDLQLGKDSPTNKLLYAKEIPEYRKIVQRYYKQIQDMTPLSEQEMNAHLAEESRKYQNEFNTNVAMAEIYKYAKRYRPQIMAALEANPTARRTQLQHKFEQVVALMEDNIYECYSEA</sequence>
<name>PLXD1_HUMAN</name>
<dbReference type="EMBL" id="AB014520">
    <property type="protein sequence ID" value="BAA31595.2"/>
    <property type="status" value="ALT_INIT"/>
    <property type="molecule type" value="mRNA"/>
</dbReference>
<dbReference type="EMBL" id="AY116661">
    <property type="protein sequence ID" value="AAM49063.1"/>
    <property type="molecule type" value="mRNA"/>
</dbReference>
<dbReference type="EMBL" id="AC023162">
    <property type="status" value="NOT_ANNOTATED_CDS"/>
    <property type="molecule type" value="Genomic_DNA"/>
</dbReference>
<dbReference type="EMBL" id="AC080007">
    <property type="status" value="NOT_ANNOTATED_CDS"/>
    <property type="molecule type" value="Genomic_DNA"/>
</dbReference>
<dbReference type="EMBL" id="BC003526">
    <property type="protein sequence ID" value="AAH03526.1"/>
    <property type="molecule type" value="mRNA"/>
</dbReference>
<dbReference type="EMBL" id="BC011848">
    <property type="protein sequence ID" value="AAH11848.1"/>
    <property type="molecule type" value="mRNA"/>
</dbReference>
<dbReference type="EMBL" id="BC150280">
    <property type="protein sequence ID" value="AAI50281.1"/>
    <property type="molecule type" value="mRNA"/>
</dbReference>
<dbReference type="CCDS" id="CCDS33854.1">
    <molecule id="Q9Y4D7-1"/>
</dbReference>
<dbReference type="RefSeq" id="NP_055918.3">
    <molecule id="Q9Y4D7-1"/>
    <property type="nucleotide sequence ID" value="NM_015103.3"/>
</dbReference>
<dbReference type="PDB" id="3H6N">
    <property type="method" value="X-ray"/>
    <property type="resolution" value="2.00 A"/>
    <property type="chains" value="A=1553-1678"/>
</dbReference>
<dbReference type="PDBsum" id="3H6N"/>
<dbReference type="SMR" id="Q9Y4D7"/>
<dbReference type="BioGRID" id="116747">
    <property type="interactions" value="32"/>
</dbReference>
<dbReference type="CORUM" id="Q9Y4D7"/>
<dbReference type="FunCoup" id="Q9Y4D7">
    <property type="interactions" value="115"/>
</dbReference>
<dbReference type="IntAct" id="Q9Y4D7">
    <property type="interactions" value="18"/>
</dbReference>
<dbReference type="MINT" id="Q9Y4D7"/>
<dbReference type="STRING" id="9606.ENSP00000317128"/>
<dbReference type="GlyConnect" id="1615">
    <property type="glycosylation" value="4 N-Linked glycans (2 sites)"/>
</dbReference>
<dbReference type="GlyCosmos" id="Q9Y4D7">
    <property type="glycosylation" value="18 sites, 4 glycans"/>
</dbReference>
<dbReference type="GlyGen" id="Q9Y4D7">
    <property type="glycosylation" value="22 sites, 23 N-linked glycans (10 sites), 1 O-linked glycan (1 site)"/>
</dbReference>
<dbReference type="iPTMnet" id="Q9Y4D7"/>
<dbReference type="PhosphoSitePlus" id="Q9Y4D7"/>
<dbReference type="BioMuta" id="PLXND1"/>
<dbReference type="DMDM" id="296452982"/>
<dbReference type="jPOST" id="Q9Y4D7"/>
<dbReference type="MassIVE" id="Q9Y4D7"/>
<dbReference type="PaxDb" id="9606-ENSP00000317128"/>
<dbReference type="PeptideAtlas" id="Q9Y4D7"/>
<dbReference type="ProteomicsDB" id="86168">
    <molecule id="Q9Y4D7-1"/>
</dbReference>
<dbReference type="ProteomicsDB" id="86169">
    <molecule id="Q9Y4D7-2"/>
</dbReference>
<dbReference type="Pumba" id="Q9Y4D7"/>
<dbReference type="Antibodypedia" id="33285">
    <property type="antibodies" value="245 antibodies from 33 providers"/>
</dbReference>
<dbReference type="DNASU" id="23129"/>
<dbReference type="Ensembl" id="ENST00000324093.9">
    <molecule id="Q9Y4D7-1"/>
    <property type="protein sequence ID" value="ENSP00000317128.4"/>
    <property type="gene ID" value="ENSG00000004399.13"/>
</dbReference>
<dbReference type="GeneID" id="23129"/>
<dbReference type="KEGG" id="hsa:23129"/>
<dbReference type="MANE-Select" id="ENST00000324093.9">
    <property type="protein sequence ID" value="ENSP00000317128.4"/>
    <property type="RefSeq nucleotide sequence ID" value="NM_015103.3"/>
    <property type="RefSeq protein sequence ID" value="NP_055918.3"/>
</dbReference>
<dbReference type="UCSC" id="uc003emx.3">
    <molecule id="Q9Y4D7-1"/>
    <property type="organism name" value="human"/>
</dbReference>
<dbReference type="AGR" id="HGNC:9107"/>
<dbReference type="CTD" id="23129"/>
<dbReference type="DisGeNET" id="23129"/>
<dbReference type="GeneCards" id="PLXND1"/>
<dbReference type="HGNC" id="HGNC:9107">
    <property type="gene designation" value="PLXND1"/>
</dbReference>
<dbReference type="HPA" id="ENSG00000004399">
    <property type="expression patterns" value="Low tissue specificity"/>
</dbReference>
<dbReference type="MalaCards" id="PLXND1"/>
<dbReference type="MIM" id="604282">
    <property type="type" value="gene"/>
</dbReference>
<dbReference type="MIM" id="620294">
    <property type="type" value="phenotype"/>
</dbReference>
<dbReference type="neXtProt" id="NX_Q9Y4D7"/>
<dbReference type="OpenTargets" id="ENSG00000004399"/>
<dbReference type="Orphanet" id="3384">
    <property type="disease" value="Common arterial trunk"/>
</dbReference>
<dbReference type="Orphanet" id="570">
    <property type="disease" value="Moebius syndrome"/>
</dbReference>
<dbReference type="PharmGKB" id="PA128394602"/>
<dbReference type="VEuPathDB" id="HostDB:ENSG00000004399"/>
<dbReference type="eggNOG" id="KOG3610">
    <property type="taxonomic scope" value="Eukaryota"/>
</dbReference>
<dbReference type="GeneTree" id="ENSGT01020000230394"/>
<dbReference type="HOGENOM" id="CLU_001436_1_1_1"/>
<dbReference type="InParanoid" id="Q9Y4D7"/>
<dbReference type="OMA" id="GHLCMWS"/>
<dbReference type="OrthoDB" id="125363at2759"/>
<dbReference type="PAN-GO" id="Q9Y4D7">
    <property type="GO annotations" value="10 GO annotations based on evolutionary models"/>
</dbReference>
<dbReference type="PhylomeDB" id="Q9Y4D7"/>
<dbReference type="TreeFam" id="TF312962"/>
<dbReference type="PathwayCommons" id="Q9Y4D7"/>
<dbReference type="Reactome" id="R-HSA-416700">
    <property type="pathway name" value="Other semaphorin interactions"/>
</dbReference>
<dbReference type="Reactome" id="R-HSA-9013508">
    <property type="pathway name" value="NOTCH3 Intracellular Domain Regulates Transcription"/>
</dbReference>
<dbReference type="Reactome" id="R-HSA-9696270">
    <property type="pathway name" value="RND2 GTPase cycle"/>
</dbReference>
<dbReference type="SignaLink" id="Q9Y4D7"/>
<dbReference type="BioGRID-ORCS" id="23129">
    <property type="hits" value="20 hits in 1162 CRISPR screens"/>
</dbReference>
<dbReference type="ChiTaRS" id="PLXND1">
    <property type="organism name" value="human"/>
</dbReference>
<dbReference type="EvolutionaryTrace" id="Q9Y4D7"/>
<dbReference type="GeneWiki" id="PLXND1"/>
<dbReference type="GenomeRNAi" id="23129"/>
<dbReference type="Pharos" id="Q9Y4D7">
    <property type="development level" value="Tbio"/>
</dbReference>
<dbReference type="PRO" id="PR:Q9Y4D7"/>
<dbReference type="Proteomes" id="UP000005640">
    <property type="component" value="Chromosome 3"/>
</dbReference>
<dbReference type="RNAct" id="Q9Y4D7">
    <property type="molecule type" value="protein"/>
</dbReference>
<dbReference type="Bgee" id="ENSG00000004399">
    <property type="expression patterns" value="Expressed in upper lobe of left lung and 196 other cell types or tissues"/>
</dbReference>
<dbReference type="ExpressionAtlas" id="Q9Y4D7">
    <property type="expression patterns" value="baseline and differential"/>
</dbReference>
<dbReference type="GO" id="GO:0030424">
    <property type="term" value="C:axon"/>
    <property type="evidence" value="ECO:0007669"/>
    <property type="project" value="Ensembl"/>
</dbReference>
<dbReference type="GO" id="GO:0044297">
    <property type="term" value="C:cell body"/>
    <property type="evidence" value="ECO:0007669"/>
    <property type="project" value="Ensembl"/>
</dbReference>
<dbReference type="GO" id="GO:0098978">
    <property type="term" value="C:glutamatergic synapse"/>
    <property type="evidence" value="ECO:0007669"/>
    <property type="project" value="Ensembl"/>
</dbReference>
<dbReference type="GO" id="GO:0030027">
    <property type="term" value="C:lamellipodium"/>
    <property type="evidence" value="ECO:0000314"/>
    <property type="project" value="UniProtKB"/>
</dbReference>
<dbReference type="GO" id="GO:0031258">
    <property type="term" value="C:lamellipodium membrane"/>
    <property type="evidence" value="ECO:0007669"/>
    <property type="project" value="UniProtKB-SubCell"/>
</dbReference>
<dbReference type="GO" id="GO:0005886">
    <property type="term" value="C:plasma membrane"/>
    <property type="evidence" value="ECO:0000250"/>
    <property type="project" value="UniProtKB"/>
</dbReference>
<dbReference type="GO" id="GO:0002116">
    <property type="term" value="C:semaphorin receptor complex"/>
    <property type="evidence" value="ECO:0000318"/>
    <property type="project" value="GO_Central"/>
</dbReference>
<dbReference type="GO" id="GO:0019904">
    <property type="term" value="F:protein domain specific binding"/>
    <property type="evidence" value="ECO:0000353"/>
    <property type="project" value="UniProtKB"/>
</dbReference>
<dbReference type="GO" id="GO:0017154">
    <property type="term" value="F:semaphorin receptor activity"/>
    <property type="evidence" value="ECO:0000250"/>
    <property type="project" value="UniProtKB"/>
</dbReference>
<dbReference type="GO" id="GO:0001525">
    <property type="term" value="P:angiogenesis"/>
    <property type="evidence" value="ECO:0000250"/>
    <property type="project" value="UniProtKB"/>
</dbReference>
<dbReference type="GO" id="GO:0035904">
    <property type="term" value="P:aorta development"/>
    <property type="evidence" value="ECO:0007669"/>
    <property type="project" value="Ensembl"/>
</dbReference>
<dbReference type="GO" id="GO:0001569">
    <property type="term" value="P:branching involved in blood vessel morphogenesis"/>
    <property type="evidence" value="ECO:0007669"/>
    <property type="project" value="Ensembl"/>
</dbReference>
<dbReference type="GO" id="GO:0003279">
    <property type="term" value="P:cardiac septum development"/>
    <property type="evidence" value="ECO:0007669"/>
    <property type="project" value="Ensembl"/>
</dbReference>
<dbReference type="GO" id="GO:0060976">
    <property type="term" value="P:coronary vasculature development"/>
    <property type="evidence" value="ECO:0007669"/>
    <property type="project" value="Ensembl"/>
</dbReference>
<dbReference type="GO" id="GO:0060666">
    <property type="term" value="P:dichotomous subdivision of terminal units involved in salivary gland branching"/>
    <property type="evidence" value="ECO:0007669"/>
    <property type="project" value="Ensembl"/>
</dbReference>
<dbReference type="GO" id="GO:0043542">
    <property type="term" value="P:endothelial cell migration"/>
    <property type="evidence" value="ECO:0000250"/>
    <property type="project" value="UniProtKB"/>
</dbReference>
<dbReference type="GO" id="GO:0001822">
    <property type="term" value="P:kidney development"/>
    <property type="evidence" value="ECO:0007669"/>
    <property type="project" value="Ensembl"/>
</dbReference>
<dbReference type="GO" id="GO:0007162">
    <property type="term" value="P:negative regulation of cell adhesion"/>
    <property type="evidence" value="ECO:0000318"/>
    <property type="project" value="GO_Central"/>
</dbReference>
<dbReference type="GO" id="GO:0043524">
    <property type="term" value="P:negative regulation of neuron apoptotic process"/>
    <property type="evidence" value="ECO:0007669"/>
    <property type="project" value="Ensembl"/>
</dbReference>
<dbReference type="GO" id="GO:0003151">
    <property type="term" value="P:outflow tract morphogenesis"/>
    <property type="evidence" value="ECO:0000304"/>
    <property type="project" value="ARUK-UCL"/>
</dbReference>
<dbReference type="GO" id="GO:0050772">
    <property type="term" value="P:positive regulation of axonogenesis"/>
    <property type="evidence" value="ECO:0000318"/>
    <property type="project" value="GO_Central"/>
</dbReference>
<dbReference type="GO" id="GO:0045765">
    <property type="term" value="P:regulation of angiogenesis"/>
    <property type="evidence" value="ECO:0000250"/>
    <property type="project" value="UniProtKB"/>
</dbReference>
<dbReference type="GO" id="GO:0030334">
    <property type="term" value="P:regulation of cell migration"/>
    <property type="evidence" value="ECO:0000250"/>
    <property type="project" value="UniProtKB"/>
</dbReference>
<dbReference type="GO" id="GO:0008360">
    <property type="term" value="P:regulation of cell shape"/>
    <property type="evidence" value="ECO:0000318"/>
    <property type="project" value="GO_Central"/>
</dbReference>
<dbReference type="GO" id="GO:0071526">
    <property type="term" value="P:semaphorin-plexin signaling pathway"/>
    <property type="evidence" value="ECO:0000250"/>
    <property type="project" value="UniProtKB"/>
</dbReference>
<dbReference type="GO" id="GO:0007416">
    <property type="term" value="P:synapse assembly"/>
    <property type="evidence" value="ECO:0000250"/>
    <property type="project" value="UniProtKB"/>
</dbReference>
<dbReference type="GO" id="GO:0008039">
    <property type="term" value="P:synaptic target recognition"/>
    <property type="evidence" value="ECO:0007669"/>
    <property type="project" value="Ensembl"/>
</dbReference>
<dbReference type="CDD" id="cd01180">
    <property type="entry name" value="IPT_plexin_repeat1"/>
    <property type="match status" value="1"/>
</dbReference>
<dbReference type="CDD" id="cd01179">
    <property type="entry name" value="IPT_plexin_repeat2"/>
    <property type="match status" value="1"/>
</dbReference>
<dbReference type="CDD" id="cd01181">
    <property type="entry name" value="IPT_plexin_repeat3"/>
    <property type="match status" value="1"/>
</dbReference>
<dbReference type="CDD" id="cd12788">
    <property type="entry name" value="RasGAP_plexin_D1"/>
    <property type="match status" value="1"/>
</dbReference>
<dbReference type="CDD" id="cd11247">
    <property type="entry name" value="Sema_plexin_D1"/>
    <property type="match status" value="1"/>
</dbReference>
<dbReference type="FunFam" id="1.10.506.10:FF:000024">
    <property type="entry name" value="Plexin D1"/>
    <property type="match status" value="1"/>
</dbReference>
<dbReference type="FunFam" id="1.10.506.10:FF:000025">
    <property type="entry name" value="Plexin D1"/>
    <property type="match status" value="1"/>
</dbReference>
<dbReference type="FunFam" id="2.130.10.10:FF:000386">
    <property type="entry name" value="Plexin D1"/>
    <property type="match status" value="1"/>
</dbReference>
<dbReference type="FunFam" id="2.60.40.10:FF:000630">
    <property type="entry name" value="Plexin D1"/>
    <property type="match status" value="1"/>
</dbReference>
<dbReference type="FunFam" id="2.60.40.10:FF:000728">
    <property type="entry name" value="Plexin D1"/>
    <property type="match status" value="1"/>
</dbReference>
<dbReference type="FunFam" id="2.60.40.10:FF:000843">
    <property type="entry name" value="Plexin D1"/>
    <property type="match status" value="1"/>
</dbReference>
<dbReference type="FunFam" id="2.60.40.10:FF:000868">
    <property type="entry name" value="Plexin D1"/>
    <property type="match status" value="1"/>
</dbReference>
<dbReference type="FunFam" id="2.60.40.10:FF:000927">
    <property type="entry name" value="Plexin D1"/>
    <property type="match status" value="1"/>
</dbReference>
<dbReference type="FunFam" id="3.10.20.90:FF:000098">
    <property type="entry name" value="Plexin D1"/>
    <property type="match status" value="1"/>
</dbReference>
<dbReference type="Gene3D" id="1.10.506.10">
    <property type="entry name" value="GTPase Activation - p120gap, domain 1"/>
    <property type="match status" value="2"/>
</dbReference>
<dbReference type="Gene3D" id="2.60.40.10">
    <property type="entry name" value="Immunoglobulins"/>
    <property type="match status" value="5"/>
</dbReference>
<dbReference type="Gene3D" id="3.10.20.90">
    <property type="entry name" value="Phosphatidylinositol 3-kinase Catalytic Subunit, Chain A, domain 1"/>
    <property type="match status" value="1"/>
</dbReference>
<dbReference type="Gene3D" id="2.130.10.10">
    <property type="entry name" value="YVTN repeat-like/Quinoprotein amine dehydrogenase"/>
    <property type="match status" value="1"/>
</dbReference>
<dbReference type="InterPro" id="IPR013783">
    <property type="entry name" value="Ig-like_fold"/>
</dbReference>
<dbReference type="InterPro" id="IPR014756">
    <property type="entry name" value="Ig_E-set"/>
</dbReference>
<dbReference type="InterPro" id="IPR002909">
    <property type="entry name" value="IPT_dom"/>
</dbReference>
<dbReference type="InterPro" id="IPR031148">
    <property type="entry name" value="Plexin"/>
</dbReference>
<dbReference type="InterPro" id="IPR042719">
    <property type="entry name" value="Plexin-D1_Sema"/>
</dbReference>
<dbReference type="InterPro" id="IPR013548">
    <property type="entry name" value="Plexin_cytoplasmic_RasGAP_dom"/>
</dbReference>
<dbReference type="InterPro" id="IPR046800">
    <property type="entry name" value="Plexin_RBD"/>
</dbReference>
<dbReference type="InterPro" id="IPR002165">
    <property type="entry name" value="Plexin_repeat"/>
</dbReference>
<dbReference type="InterPro" id="IPR016201">
    <property type="entry name" value="PSI"/>
</dbReference>
<dbReference type="InterPro" id="IPR008936">
    <property type="entry name" value="Rho_GTPase_activation_prot"/>
</dbReference>
<dbReference type="InterPro" id="IPR001627">
    <property type="entry name" value="Semap_dom"/>
</dbReference>
<dbReference type="InterPro" id="IPR036352">
    <property type="entry name" value="Semap_dom_sf"/>
</dbReference>
<dbReference type="InterPro" id="IPR041019">
    <property type="entry name" value="TIG1_plexin"/>
</dbReference>
<dbReference type="InterPro" id="IPR015943">
    <property type="entry name" value="WD40/YVTN_repeat-like_dom_sf"/>
</dbReference>
<dbReference type="PANTHER" id="PTHR22625">
    <property type="entry name" value="PLEXIN"/>
    <property type="match status" value="1"/>
</dbReference>
<dbReference type="PANTHER" id="PTHR22625:SF7">
    <property type="entry name" value="PLEXIN-D1"/>
    <property type="match status" value="1"/>
</dbReference>
<dbReference type="Pfam" id="PF08337">
    <property type="entry name" value="Plexin_cytopl"/>
    <property type="match status" value="1"/>
</dbReference>
<dbReference type="Pfam" id="PF20170">
    <property type="entry name" value="Plexin_RBD"/>
    <property type="match status" value="1"/>
</dbReference>
<dbReference type="Pfam" id="PF01437">
    <property type="entry name" value="PSI"/>
    <property type="match status" value="1"/>
</dbReference>
<dbReference type="Pfam" id="PF01403">
    <property type="entry name" value="Sema"/>
    <property type="match status" value="1"/>
</dbReference>
<dbReference type="Pfam" id="PF01833">
    <property type="entry name" value="TIG"/>
    <property type="match status" value="3"/>
</dbReference>
<dbReference type="Pfam" id="PF17960">
    <property type="entry name" value="TIG_plexin"/>
    <property type="match status" value="1"/>
</dbReference>
<dbReference type="SMART" id="SM00429">
    <property type="entry name" value="IPT"/>
    <property type="match status" value="3"/>
</dbReference>
<dbReference type="SMART" id="SM00423">
    <property type="entry name" value="PSI"/>
    <property type="match status" value="3"/>
</dbReference>
<dbReference type="SMART" id="SM00630">
    <property type="entry name" value="Sema"/>
    <property type="match status" value="1"/>
</dbReference>
<dbReference type="SUPFAM" id="SSF81296">
    <property type="entry name" value="E set domains"/>
    <property type="match status" value="3"/>
</dbReference>
<dbReference type="SUPFAM" id="SSF48350">
    <property type="entry name" value="GTPase activation domain, GAP"/>
    <property type="match status" value="1"/>
</dbReference>
<dbReference type="SUPFAM" id="SSF103575">
    <property type="entry name" value="Plexin repeat"/>
    <property type="match status" value="1"/>
</dbReference>
<dbReference type="SUPFAM" id="SSF101912">
    <property type="entry name" value="Sema domain"/>
    <property type="match status" value="1"/>
</dbReference>
<dbReference type="PROSITE" id="PS51004">
    <property type="entry name" value="SEMA"/>
    <property type="match status" value="1"/>
</dbReference>
<comment type="function">
    <text evidence="1 10">Cell surface receptor for SEMA4A and for class 3 semaphorins, such as SEMA3A, SEMA3C and SEMA3E. Plays an important role in cell-cell signaling, and in regulating the migration of a wide spectrum of cell types. Regulates the migration of thymocytes in the medulla. Regulates endothelial cell migration. Plays an important role in ensuring the specificity of synapse formation. Required for normal development of the heart and vasculature (By similarity). Mediates anti-angiogenic signaling in response to SEMA3E.</text>
</comment>
<comment type="subunit">
    <text evidence="2 12">Interacts with NRP1 and SEMA4A (By similarity). Interacts with SH3BP1; they dissociate upon SEMA3E binding to PLXND1 allowing SH3BP1 to transduce downstream signal through RAC1 inactivation (PubMed:24841563).</text>
</comment>
<comment type="interaction">
    <interactant intactId="EBI-310731">
        <id>Q9Y4D7</id>
    </interactant>
    <interactant intactId="EBI-3893317">
        <id>P09067</id>
        <label>HOXB5</label>
    </interactant>
    <organismsDiffer>false</organismsDiffer>
    <experiments>3</experiments>
</comment>
<comment type="interaction">
    <interactant intactId="EBI-310731">
        <id>Q9Y4D7</id>
    </interactant>
    <interactant intactId="EBI-721550">
        <id>P22736</id>
        <label>NR4A1</label>
    </interactant>
    <organismsDiffer>false</organismsDiffer>
    <experiments>2</experiments>
</comment>
<comment type="interaction">
    <interactant intactId="EBI-310731">
        <id>Q9Y4D7</id>
    </interactant>
    <interactant intactId="EBI-7283693">
        <id>O15041</id>
        <label>SEMA3E</label>
    </interactant>
    <organismsDiffer>false</organismsDiffer>
    <experiments>2</experiments>
</comment>
<comment type="interaction">
    <interactant intactId="EBI-310731">
        <id>Q9Y4D7</id>
    </interactant>
    <interactant intactId="EBI-3924922">
        <id>Q9H3S1</id>
        <label>SEMA4A</label>
    </interactant>
    <organismsDiffer>false</organismsDiffer>
    <experiments>2</experiments>
</comment>
<comment type="interaction">
    <interactant intactId="EBI-310731">
        <id>Q9Y4D7</id>
    </interactant>
    <interactant intactId="EBI-8876322">
        <id>P70275</id>
        <label>Sema3e</label>
    </interactant>
    <organismsDiffer>true</organismsDiffer>
    <experiments>2</experiments>
</comment>
<comment type="subcellular location">
    <subcellularLocation>
        <location evidence="2">Cell membrane</location>
        <topology evidence="2">Single-pass membrane protein</topology>
    </subcellularLocation>
    <subcellularLocation>
        <location evidence="12">Cell projection</location>
        <location evidence="12">Lamellipodium membrane</location>
    </subcellularLocation>
</comment>
<comment type="alternative products">
    <event type="alternative splicing"/>
    <isoform>
        <id>Q9Y4D7-1</id>
        <name>1</name>
        <sequence type="displayed"/>
    </isoform>
    <isoform>
        <id>Q9Y4D7-2</id>
        <name>2</name>
        <sequence type="described" ref="VSP_011516"/>
    </isoform>
</comment>
<comment type="tissue specificity">
    <text evidence="6">Detected at low levels in heart, placenta, lung, skeletal muscle, kidney, thymus and liver. Detected at very low levels in brain, colon, spleen, small intestine and peripheral blood leukocytes.</text>
</comment>
<comment type="disease" evidence="11 13">
    <disease id="DI-06632">
        <name>Congenital heart defects, multiple types, 9</name>
        <acronym>CHTD9</acronym>
        <description>An autosomal recessive disorder characterized by congenital developmental abnormalities involving structures of the heart. CHTD9 features include common arterial trunk, tetralogy of Fallot, interrupted aortic arch, right aortic arch, ventricular hypoplasia, and hypoplastic left heart, as well as other vascular and valvular anomalies.</description>
        <dbReference type="MIM" id="620294"/>
    </disease>
    <text>The disease is caused by variants affecting the gene represented in this entry.</text>
</comment>
<comment type="similarity">
    <text evidence="16">Belongs to the plexin family.</text>
</comment>
<comment type="sequence caution" evidence="16">
    <conflict type="erroneous initiation">
        <sequence resource="EMBL-CDS" id="BAA31595"/>
    </conflict>
    <text>Extended N-terminus.</text>
</comment>
<accession>Q9Y4D7</accession>
<accession>A7E2C6</accession>
<accession>C9JPZ6</accession>
<accession>Q6PJS9</accession>
<accession>Q8IZJ2</accession>
<accession>Q9BTQ2</accession>
<organism>
    <name type="scientific">Homo sapiens</name>
    <name type="common">Human</name>
    <dbReference type="NCBI Taxonomy" id="9606"/>
    <lineage>
        <taxon>Eukaryota</taxon>
        <taxon>Metazoa</taxon>
        <taxon>Chordata</taxon>
        <taxon>Craniata</taxon>
        <taxon>Vertebrata</taxon>
        <taxon>Euteleostomi</taxon>
        <taxon>Mammalia</taxon>
        <taxon>Eutheria</taxon>
        <taxon>Euarchontoglires</taxon>
        <taxon>Primates</taxon>
        <taxon>Haplorrhini</taxon>
        <taxon>Catarrhini</taxon>
        <taxon>Hominidae</taxon>
        <taxon>Homo</taxon>
    </lineage>
</organism>
<reference key="1">
    <citation type="journal article" date="1998" name="DNA Res.">
        <title>Prediction of the coding sequences of unidentified human genes. X. The complete sequences of 100 new cDNA clones from brain which can code for large proteins in vitro.</title>
        <authorList>
            <person name="Ishikawa K."/>
            <person name="Nagase T."/>
            <person name="Suyama M."/>
            <person name="Miyajima N."/>
            <person name="Tanaka A."/>
            <person name="Kotani H."/>
            <person name="Nomura N."/>
            <person name="Ohara O."/>
        </authorList>
    </citation>
    <scope>NUCLEOTIDE SEQUENCE [LARGE SCALE MRNA] (ISOFORM 1)</scope>
    <scope>VARIANTS ARG-894 AND ASN-1542</scope>
    <source>
        <tissue>Brain</tissue>
    </source>
</reference>
<reference key="2">
    <citation type="submission" date="2010-11" db="EMBL/GenBank/DDBJ databases">
        <authorList>
            <person name="Ohara O."/>
            <person name="Suyama M."/>
            <person name="Nagase T."/>
            <person name="Ishikawa K."/>
        </authorList>
    </citation>
    <scope>SEQUENCE REVISION</scope>
</reference>
<reference key="3">
    <citation type="journal article" date="2002" name="Dev. Dyn.">
        <title>PLEXIN-D1, a novel plexin family member, is expressed in vascular endothelium and the central nervous system during mouse embryogenesis.</title>
        <authorList>
            <person name="van der Zwaag B."/>
            <person name="Hellemons A.J.C.G.M."/>
            <person name="Leenders W.P.J."/>
            <person name="Burbach J.P.H."/>
            <person name="Brunner H.G."/>
            <person name="Padberg G.W."/>
            <person name="Van Bokhoven H."/>
        </authorList>
    </citation>
    <scope>NUCLEOTIDE SEQUENCE [MRNA] (ISOFORM 1)</scope>
    <scope>TISSUE SPECIFICITY</scope>
    <scope>VARIANTS VARIANT ARG-894 AND ASN-1542</scope>
</reference>
<reference key="4">
    <citation type="journal article" date="2006" name="Nature">
        <title>The DNA sequence, annotation and analysis of human chromosome 3.</title>
        <authorList>
            <person name="Muzny D.M."/>
            <person name="Scherer S.E."/>
            <person name="Kaul R."/>
            <person name="Wang J."/>
            <person name="Yu J."/>
            <person name="Sudbrak R."/>
            <person name="Buhay C.J."/>
            <person name="Chen R."/>
            <person name="Cree A."/>
            <person name="Ding Y."/>
            <person name="Dugan-Rocha S."/>
            <person name="Gill R."/>
            <person name="Gunaratne P."/>
            <person name="Harris R.A."/>
            <person name="Hawes A.C."/>
            <person name="Hernandez J."/>
            <person name="Hodgson A.V."/>
            <person name="Hume J."/>
            <person name="Jackson A."/>
            <person name="Khan Z.M."/>
            <person name="Kovar-Smith C."/>
            <person name="Lewis L.R."/>
            <person name="Lozado R.J."/>
            <person name="Metzker M.L."/>
            <person name="Milosavljevic A."/>
            <person name="Miner G.R."/>
            <person name="Morgan M.B."/>
            <person name="Nazareth L.V."/>
            <person name="Scott G."/>
            <person name="Sodergren E."/>
            <person name="Song X.-Z."/>
            <person name="Steffen D."/>
            <person name="Wei S."/>
            <person name="Wheeler D.A."/>
            <person name="Wright M.W."/>
            <person name="Worley K.C."/>
            <person name="Yuan Y."/>
            <person name="Zhang Z."/>
            <person name="Adams C.Q."/>
            <person name="Ansari-Lari M.A."/>
            <person name="Ayele M."/>
            <person name="Brown M.J."/>
            <person name="Chen G."/>
            <person name="Chen Z."/>
            <person name="Clendenning J."/>
            <person name="Clerc-Blankenburg K.P."/>
            <person name="Chen R."/>
            <person name="Chen Z."/>
            <person name="Davis C."/>
            <person name="Delgado O."/>
            <person name="Dinh H.H."/>
            <person name="Dong W."/>
            <person name="Draper H."/>
            <person name="Ernst S."/>
            <person name="Fu G."/>
            <person name="Gonzalez-Garay M.L."/>
            <person name="Garcia D.K."/>
            <person name="Gillett W."/>
            <person name="Gu J."/>
            <person name="Hao B."/>
            <person name="Haugen E."/>
            <person name="Havlak P."/>
            <person name="He X."/>
            <person name="Hennig S."/>
            <person name="Hu S."/>
            <person name="Huang W."/>
            <person name="Jackson L.R."/>
            <person name="Jacob L.S."/>
            <person name="Kelly S.H."/>
            <person name="Kube M."/>
            <person name="Levy R."/>
            <person name="Li Z."/>
            <person name="Liu B."/>
            <person name="Liu J."/>
            <person name="Liu W."/>
            <person name="Lu J."/>
            <person name="Maheshwari M."/>
            <person name="Nguyen B.-V."/>
            <person name="Okwuonu G.O."/>
            <person name="Palmeiri A."/>
            <person name="Pasternak S."/>
            <person name="Perez L.M."/>
            <person name="Phelps K.A."/>
            <person name="Plopper F.J."/>
            <person name="Qiang B."/>
            <person name="Raymond C."/>
            <person name="Rodriguez R."/>
            <person name="Saenphimmachak C."/>
            <person name="Santibanez J."/>
            <person name="Shen H."/>
            <person name="Shen Y."/>
            <person name="Subramanian S."/>
            <person name="Tabor P.E."/>
            <person name="Verduzco D."/>
            <person name="Waldron L."/>
            <person name="Wang J."/>
            <person name="Wang J."/>
            <person name="Wang Q."/>
            <person name="Williams G.A."/>
            <person name="Wong G.K.-S."/>
            <person name="Yao Z."/>
            <person name="Zhang J."/>
            <person name="Zhang X."/>
            <person name="Zhao G."/>
            <person name="Zhou J."/>
            <person name="Zhou Y."/>
            <person name="Nelson D."/>
            <person name="Lehrach H."/>
            <person name="Reinhardt R."/>
            <person name="Naylor S.L."/>
            <person name="Yang H."/>
            <person name="Olson M."/>
            <person name="Weinstock G."/>
            <person name="Gibbs R.A."/>
        </authorList>
    </citation>
    <scope>NUCLEOTIDE SEQUENCE [LARGE SCALE GENOMIC DNA]</scope>
</reference>
<reference key="5">
    <citation type="journal article" date="2004" name="Genome Res.">
        <title>The status, quality, and expansion of the NIH full-length cDNA project: the Mammalian Gene Collection (MGC).</title>
        <authorList>
            <consortium name="The MGC Project Team"/>
        </authorList>
    </citation>
    <scope>NUCLEOTIDE SEQUENCE [LARGE SCALE MRNA] OF 1386-1925 (ISOFORMS 1 AND 2)</scope>
    <scope>VARIANT ASN-1542</scope>
    <source>
        <tissue>Muscle</tissue>
        <tissue>Uterus</tissue>
    </source>
</reference>
<reference key="6">
    <citation type="journal article" date="2005" name="J. Proteome Res.">
        <title>Human plasma N-glycoproteome analysis by immunoaffinity subtraction, hydrazide chemistry, and mass spectrometry.</title>
        <authorList>
            <person name="Liu T."/>
            <person name="Qian W.-J."/>
            <person name="Gritsenko M.A."/>
            <person name="Camp D.G. II"/>
            <person name="Monroe M.E."/>
            <person name="Moore R.J."/>
            <person name="Smith R.D."/>
        </authorList>
    </citation>
    <scope>GLYCOSYLATION [LARGE SCALE ANALYSIS] AT ASN-500</scope>
    <source>
        <tissue>Plasma</tissue>
    </source>
</reference>
<reference key="7">
    <citation type="journal article" date="2009" name="J. Proteome Res.">
        <title>Glycoproteomics analysis of human liver tissue by combination of multiple enzyme digestion and hydrazide chemistry.</title>
        <authorList>
            <person name="Chen R."/>
            <person name="Jiang X."/>
            <person name="Sun D."/>
            <person name="Han G."/>
            <person name="Wang F."/>
            <person name="Ye M."/>
            <person name="Wang L."/>
            <person name="Zou H."/>
        </authorList>
    </citation>
    <scope>GLYCOSYLATION [LARGE SCALE ANALYSIS] AT ASN-500</scope>
    <source>
        <tissue>Liver</tissue>
    </source>
</reference>
<reference key="8">
    <citation type="journal article" date="2010" name="Mol. Cell. Biol.">
        <title>Semaphorin 3E initiates antiangiogenic signaling through plexin D1 by regulating Arf6 and R-Ras.</title>
        <authorList>
            <person name="Sakurai A."/>
            <person name="Gavard J."/>
            <person name="Annas-Linhares Y."/>
            <person name="Basile J.R."/>
            <person name="Amornphimoltham P."/>
            <person name="Palmby T.R."/>
            <person name="Yagi H."/>
            <person name="Zhang F."/>
            <person name="Randazzo P.A."/>
            <person name="Li X."/>
            <person name="Weigert R."/>
            <person name="Gutkind J.S."/>
        </authorList>
    </citation>
    <scope>FUNCTION</scope>
</reference>
<reference key="9">
    <citation type="journal article" date="2014" name="J. Cell Biol.">
        <title>An image-based RNAi screen identifies SH3BP1 as a key effector of Semaphorin 3E-PlexinD1 signaling.</title>
        <authorList>
            <person name="Tata A."/>
            <person name="Stoppel D.C."/>
            <person name="Hong S."/>
            <person name="Ben-Zvi A."/>
            <person name="Xie T."/>
            <person name="Gu C."/>
        </authorList>
    </citation>
    <scope>INTERACTION WITH SH3BP1</scope>
    <scope>SUBCELLULAR LOCATION</scope>
</reference>
<reference key="10">
    <citation type="submission" date="2009-05" db="PDB data bank">
        <title>Crystal structure of the ubiquitin-like domain of plexin D1.</title>
        <authorList>
            <consortium name="Structural genomics consortium (SGC)"/>
        </authorList>
    </citation>
    <scope>X-RAY CRYSTALLOGRAPHY (2.0 ANGSTROMS) OF 1553-1678</scope>
</reference>
<reference key="11">
    <citation type="journal article" date="2013" name="Am. J. Med. Genet. A">
        <title>Isolated truncus arteriosus associated with a mutation in the plexin-D1 gene.</title>
        <authorList>
            <person name="Ta-Shma A."/>
            <person name="Pierri C.L."/>
            <person name="Stepensky P."/>
            <person name="Shaag A."/>
            <person name="Zenvirt S."/>
            <person name="Elpeleg O."/>
            <person name="Rein A.J."/>
        </authorList>
    </citation>
    <scope>VARIANT CHTD9 CYS-1299</scope>
    <scope>INVOLVEMENT IN CHTD9</scope>
</reference>
<reference key="12">
    <citation type="journal article" date="2023" name="Hum. Mol. Genet.">
        <title>Biallelic alterations in PLXND1 cause common arterial trunk and other cardiac malformations in humans.</title>
        <authorList>
            <person name="Guimier A."/>
            <person name="de Pontual L."/>
            <person name="Braddock S.R."/>
            <person name="Torti E."/>
            <person name="Perez-Jurado L.A."/>
            <person name="Munoz-Cabello P."/>
            <person name="Arumi M."/>
            <person name="Monaghan K.G."/>
            <person name="Lee H."/>
            <person name="Wang L.K."/>
            <person name="Pluym I.D."/>
            <person name="Lynch S.A."/>
            <person name="Stals K."/>
            <person name="Ellard S."/>
            <person name="Muller C."/>
            <person name="Houyel L."/>
            <person name="Cohen L."/>
            <person name="Lyonnet S."/>
            <person name="Bajolle F."/>
            <person name="Amiel J."/>
            <person name="Gordon C.T."/>
        </authorList>
    </citation>
    <scope>VARIANTS CHTD9 CYS-218; MET-911 AND PHE-1775</scope>
    <scope>INVOLVEMENT IN CHTD9</scope>
</reference>
<proteinExistence type="evidence at protein level"/>
<feature type="signal peptide" evidence="3">
    <location>
        <begin position="1"/>
        <end position="46"/>
    </location>
</feature>
<feature type="chain" id="PRO_0000024676" description="Plexin-D1">
    <location>
        <begin position="47"/>
        <end position="1925"/>
    </location>
</feature>
<feature type="topological domain" description="Extracellular" evidence="3">
    <location>
        <begin position="47"/>
        <end position="1271"/>
    </location>
</feature>
<feature type="transmembrane region" description="Helical" evidence="3">
    <location>
        <begin position="1272"/>
        <end position="1292"/>
    </location>
</feature>
<feature type="topological domain" description="Cytoplasmic" evidence="3">
    <location>
        <begin position="1293"/>
        <end position="1925"/>
    </location>
</feature>
<feature type="domain" description="Sema" evidence="4">
    <location>
        <begin position="47"/>
        <end position="546"/>
    </location>
</feature>
<feature type="domain" description="IPT/TIG 1">
    <location>
        <begin position="891"/>
        <end position="979"/>
    </location>
</feature>
<feature type="domain" description="IPT/TIG 2">
    <location>
        <begin position="981"/>
        <end position="1066"/>
    </location>
</feature>
<feature type="domain" description="IPT/TIG 3">
    <location>
        <begin position="1069"/>
        <end position="1160"/>
    </location>
</feature>
<feature type="region of interest" description="Disordered" evidence="5">
    <location>
        <begin position="1"/>
        <end position="23"/>
    </location>
</feature>
<feature type="compositionally biased region" description="Low complexity" evidence="5">
    <location>
        <begin position="1"/>
        <end position="18"/>
    </location>
</feature>
<feature type="glycosylation site" description="N-linked (GlcNAc...) asparagine" evidence="3">
    <location>
        <position position="86"/>
    </location>
</feature>
<feature type="glycosylation site" description="N-linked (GlcNAc...) asparagine" evidence="3">
    <location>
        <position position="155"/>
    </location>
</feature>
<feature type="glycosylation site" description="N-linked (GlcNAc...) asparagine" evidence="3">
    <location>
        <position position="188"/>
    </location>
</feature>
<feature type="glycosylation site" description="N-linked (GlcNAc...) asparagine" evidence="3">
    <location>
        <position position="224"/>
    </location>
</feature>
<feature type="glycosylation site" description="N-linked (GlcNAc...) asparagine" evidence="3">
    <location>
        <position position="481"/>
    </location>
</feature>
<feature type="glycosylation site" description="N-linked (GlcNAc...) asparagine" evidence="8 9">
    <location>
        <position position="500"/>
    </location>
</feature>
<feature type="glycosylation site" description="N-linked (GlcNAc...) asparagine" evidence="3">
    <location>
        <position position="583"/>
    </location>
</feature>
<feature type="glycosylation site" description="N-linked (GlcNAc...) asparagine" evidence="3">
    <location>
        <position position="696"/>
    </location>
</feature>
<feature type="glycosylation site" description="N-linked (GlcNAc...) asparagine" evidence="3">
    <location>
        <position position="736"/>
    </location>
</feature>
<feature type="glycosylation site" description="N-linked (GlcNAc...) asparagine" evidence="3">
    <location>
        <position position="802"/>
    </location>
</feature>
<feature type="glycosylation site" description="N-linked (GlcNAc...) asparagine" evidence="3">
    <location>
        <position position="965"/>
    </location>
</feature>
<feature type="glycosylation site" description="N-linked (GlcNAc...) asparagine" evidence="3">
    <location>
        <position position="1017"/>
    </location>
</feature>
<feature type="glycosylation site" description="N-linked (GlcNAc...) asparagine" evidence="3">
    <location>
        <position position="1060"/>
    </location>
</feature>
<feature type="glycosylation site" description="N-linked (GlcNAc...) asparagine" evidence="3">
    <location>
        <position position="1099"/>
    </location>
</feature>
<feature type="glycosylation site" description="N-linked (GlcNAc...) asparagine" evidence="3">
    <location>
        <position position="1118"/>
    </location>
</feature>
<feature type="glycosylation site" description="N-linked (GlcNAc...) asparagine" evidence="3">
    <location>
        <position position="1132"/>
    </location>
</feature>
<feature type="glycosylation site" description="N-linked (GlcNAc...) asparagine" evidence="3">
    <location>
        <position position="1237"/>
    </location>
</feature>
<feature type="glycosylation site" description="N-linked (GlcNAc...) asparagine" evidence="3">
    <location>
        <position position="1257"/>
    </location>
</feature>
<feature type="disulfide bond" evidence="4">
    <location>
        <begin position="104"/>
        <end position="114"/>
    </location>
</feature>
<feature type="disulfide bond" evidence="4">
    <location>
        <begin position="140"/>
        <end position="148"/>
    </location>
</feature>
<feature type="disulfide bond" evidence="4">
    <location>
        <begin position="322"/>
        <end position="445"/>
    </location>
</feature>
<feature type="disulfide bond" evidence="4">
    <location>
        <begin position="345"/>
        <end position="389"/>
    </location>
</feature>
<feature type="disulfide bond" evidence="4">
    <location>
        <begin position="549"/>
        <end position="566"/>
    </location>
</feature>
<feature type="disulfide bond" evidence="4">
    <location>
        <begin position="555"/>
        <end position="600"/>
    </location>
</feature>
<feature type="disulfide bond" evidence="4">
    <location>
        <begin position="558"/>
        <end position="575"/>
    </location>
</feature>
<feature type="disulfide bond" evidence="4">
    <location>
        <begin position="569"/>
        <end position="581"/>
    </location>
</feature>
<feature type="disulfide bond" evidence="4">
    <location>
        <begin position="637"/>
        <end position="661"/>
    </location>
</feature>
<feature type="splice variant" id="VSP_011516" description="In isoform 2." evidence="15">
    <original>SLPLRFWVNILKNPQFVFDIDKTDHIDACLSVIAQAFIDACSISDLQLGKDSPTNKLLYAKEIPEYRKIVQRYYKQIQDMTPLSEQEMNAHLAEESRKYQNEFNTNVAMAEIYKYAKRYRPQIMAALEANPTARRTQLQHKFEQVVALMEDNIYECYSEA</original>
    <variation>RWRPSSPVLGEHPEEPPVCL</variation>
    <location>
        <begin position="1766"/>
        <end position="1925"/>
    </location>
</feature>
<feature type="sequence variant" id="VAR_088299" description="In CHTD9; uncertain significance." evidence="13">
    <original>S</original>
    <variation>C</variation>
    <location>
        <position position="218"/>
    </location>
</feature>
<feature type="sequence variant" id="VAR_056723" description="In dbSNP:rs2285372.">
    <original>P</original>
    <variation>S</variation>
    <location>
        <position position="617"/>
    </location>
</feature>
<feature type="sequence variant" id="VAR_022144" description="In dbSNP:rs2255703.">
    <original>M</original>
    <variation>V</variation>
    <location>
        <position position="870"/>
    </location>
</feature>
<feature type="sequence variant" id="VAR_059558" description="In dbSNP:rs2625962." evidence="6 14">
    <original>H</original>
    <variation>R</variation>
    <location>
        <position position="894"/>
    </location>
</feature>
<feature type="sequence variant" id="VAR_088300" description="In CHTD9; dbSNP:rs2085270404." evidence="13">
    <original>I</original>
    <variation>M</variation>
    <location>
        <position position="911"/>
    </location>
</feature>
<feature type="sequence variant" id="VAR_088301" description="In CHTD9; uncertain significance; dbSNP:rs2085164025." evidence="11">
    <original>R</original>
    <variation>C</variation>
    <location>
        <position position="1299"/>
    </location>
</feature>
<feature type="sequence variant" id="VAR_056724" description="In dbSNP:rs2625973.">
    <original>L</original>
    <variation>V</variation>
    <location>
        <position position="1412"/>
    </location>
</feature>
<feature type="sequence variant" id="VAR_061539" description="In dbSNP:rs2713625." evidence="6 7 14">
    <original>S</original>
    <variation>N</variation>
    <location>
        <position position="1542"/>
    </location>
</feature>
<feature type="sequence variant" id="VAR_088302" description="In CHTD9." evidence="13">
    <original>I</original>
    <variation>F</variation>
    <location>
        <position position="1775"/>
    </location>
</feature>
<feature type="sequence conflict" description="In Ref. 1; BAA31595 and 3; AAM49063." evidence="16" ref="1 3">
    <original>G</original>
    <variation>V</variation>
    <location>
        <position position="531"/>
    </location>
</feature>
<feature type="strand" evidence="17">
    <location>
        <begin position="1555"/>
        <end position="1563"/>
    </location>
</feature>
<feature type="strand" evidence="17">
    <location>
        <begin position="1570"/>
        <end position="1575"/>
    </location>
</feature>
<feature type="helix" evidence="17">
    <location>
        <begin position="1580"/>
        <end position="1591"/>
    </location>
</feature>
<feature type="helix" evidence="17">
    <location>
        <begin position="1597"/>
        <end position="1599"/>
    </location>
</feature>
<feature type="helix" evidence="17">
    <location>
        <begin position="1603"/>
        <end position="1605"/>
    </location>
</feature>
<feature type="strand" evidence="17">
    <location>
        <begin position="1606"/>
        <end position="1611"/>
    </location>
</feature>
<feature type="strand" evidence="17">
    <location>
        <begin position="1613"/>
        <end position="1615"/>
    </location>
</feature>
<feature type="strand" evidence="17">
    <location>
        <begin position="1617"/>
        <end position="1619"/>
    </location>
</feature>
<feature type="strand" evidence="17">
    <location>
        <begin position="1622"/>
        <end position="1624"/>
    </location>
</feature>
<feature type="turn" evidence="17">
    <location>
        <begin position="1639"/>
        <end position="1643"/>
    </location>
</feature>
<feature type="strand" evidence="17">
    <location>
        <begin position="1649"/>
        <end position="1654"/>
    </location>
</feature>